<feature type="chain" id="PRO_1000130723" description="Nucleotide-binding protein A1S_0588">
    <location>
        <begin position="1"/>
        <end position="283"/>
    </location>
</feature>
<feature type="binding site" evidence="1">
    <location>
        <begin position="9"/>
        <end position="16"/>
    </location>
    <ligand>
        <name>ATP</name>
        <dbReference type="ChEBI" id="CHEBI:30616"/>
    </ligand>
</feature>
<feature type="binding site" evidence="1">
    <location>
        <begin position="59"/>
        <end position="62"/>
    </location>
    <ligand>
        <name>GTP</name>
        <dbReference type="ChEBI" id="CHEBI:37565"/>
    </ligand>
</feature>
<proteinExistence type="inferred from homology"/>
<reference key="1">
    <citation type="journal article" date="2007" name="Genes Dev.">
        <title>New insights into Acinetobacter baumannii pathogenesis revealed by high-density pyrosequencing and transposon mutagenesis.</title>
        <authorList>
            <person name="Smith M.G."/>
            <person name="Gianoulis T.A."/>
            <person name="Pukatzki S."/>
            <person name="Mekalanos J.J."/>
            <person name="Ornston L.N."/>
            <person name="Gerstein M."/>
            <person name="Snyder M."/>
        </authorList>
    </citation>
    <scope>NUCLEOTIDE SEQUENCE [LARGE SCALE GENOMIC DNA]</scope>
    <source>
        <strain>ATCC 17978 / DSM 105126 / CIP 53.77 / LMG 1025 / NCDC KC755 / 5377</strain>
    </source>
</reference>
<gene>
    <name type="ordered locus">A1S_0588</name>
</gene>
<dbReference type="EMBL" id="CP000521">
    <property type="protein sequence ID" value="ABO11039.2"/>
    <property type="molecule type" value="Genomic_DNA"/>
</dbReference>
<dbReference type="SMR" id="A3M295"/>
<dbReference type="KEGG" id="acb:A1S_0588"/>
<dbReference type="HOGENOM" id="CLU_059558_1_1_6"/>
<dbReference type="GO" id="GO:0005524">
    <property type="term" value="F:ATP binding"/>
    <property type="evidence" value="ECO:0007669"/>
    <property type="project" value="UniProtKB-UniRule"/>
</dbReference>
<dbReference type="GO" id="GO:0005525">
    <property type="term" value="F:GTP binding"/>
    <property type="evidence" value="ECO:0007669"/>
    <property type="project" value="UniProtKB-UniRule"/>
</dbReference>
<dbReference type="Gene3D" id="3.40.50.300">
    <property type="entry name" value="P-loop containing nucleotide triphosphate hydrolases"/>
    <property type="match status" value="1"/>
</dbReference>
<dbReference type="HAMAP" id="MF_00636">
    <property type="entry name" value="RapZ_like"/>
    <property type="match status" value="1"/>
</dbReference>
<dbReference type="InterPro" id="IPR027417">
    <property type="entry name" value="P-loop_NTPase"/>
</dbReference>
<dbReference type="InterPro" id="IPR005337">
    <property type="entry name" value="RapZ-like"/>
</dbReference>
<dbReference type="InterPro" id="IPR053930">
    <property type="entry name" value="RapZ-like_N"/>
</dbReference>
<dbReference type="InterPro" id="IPR053931">
    <property type="entry name" value="RapZ_C"/>
</dbReference>
<dbReference type="NCBIfam" id="NF003828">
    <property type="entry name" value="PRK05416.1"/>
    <property type="match status" value="1"/>
</dbReference>
<dbReference type="PANTHER" id="PTHR30448">
    <property type="entry name" value="RNASE ADAPTER PROTEIN RAPZ"/>
    <property type="match status" value="1"/>
</dbReference>
<dbReference type="PANTHER" id="PTHR30448:SF0">
    <property type="entry name" value="RNASE ADAPTER PROTEIN RAPZ"/>
    <property type="match status" value="1"/>
</dbReference>
<dbReference type="Pfam" id="PF22740">
    <property type="entry name" value="PapZ_C"/>
    <property type="match status" value="1"/>
</dbReference>
<dbReference type="Pfam" id="PF03668">
    <property type="entry name" value="RapZ-like_N"/>
    <property type="match status" value="1"/>
</dbReference>
<dbReference type="PIRSF" id="PIRSF005052">
    <property type="entry name" value="P-loopkin"/>
    <property type="match status" value="1"/>
</dbReference>
<dbReference type="SUPFAM" id="SSF52540">
    <property type="entry name" value="P-loop containing nucleoside triphosphate hydrolases"/>
    <property type="match status" value="1"/>
</dbReference>
<keyword id="KW-0067">ATP-binding</keyword>
<keyword id="KW-0342">GTP-binding</keyword>
<keyword id="KW-0547">Nucleotide-binding</keyword>
<sequence length="283" mass="32557">MKRILIVTGQSGSGKSSALQVLEDLGYYCIDNLPLALLPEIVAKLDHENNLEQLALGVDVRSTRADMQEFDHVFEQLQKHGTVDVIYLTTQDQDLIARFSASRRPHPLANRFKSLLQCIHEEKQLLIPIQFRATVHIDTTDKSVHDLKHILLSKLGQSDNLIVILQSFGYKHGIPLDADYVFDVRHLPNPHWDLELRRFSGLDEPVKQFLEASPQANEMFEDILHFLKKWLPAFAEGHRHYMTISIGCTGGQHRSVYMVDRLKQALEAEWSVQVLHREMKHWS</sequence>
<protein>
    <recommendedName>
        <fullName evidence="1">Nucleotide-binding protein A1S_0588</fullName>
    </recommendedName>
</protein>
<evidence type="ECO:0000255" key="1">
    <source>
        <dbReference type="HAMAP-Rule" id="MF_00636"/>
    </source>
</evidence>
<name>Y588_ACIBT</name>
<organism>
    <name type="scientific">Acinetobacter baumannii (strain ATCC 17978 / DSM 105126 / CIP 53.77 / LMG 1025 / NCDC KC755 / 5377)</name>
    <dbReference type="NCBI Taxonomy" id="400667"/>
    <lineage>
        <taxon>Bacteria</taxon>
        <taxon>Pseudomonadati</taxon>
        <taxon>Pseudomonadota</taxon>
        <taxon>Gammaproteobacteria</taxon>
        <taxon>Moraxellales</taxon>
        <taxon>Moraxellaceae</taxon>
        <taxon>Acinetobacter</taxon>
        <taxon>Acinetobacter calcoaceticus/baumannii complex</taxon>
    </lineage>
</organism>
<accession>A3M295</accession>
<comment type="function">
    <text evidence="1">Displays ATPase and GTPase activities.</text>
</comment>
<comment type="similarity">
    <text evidence="1">Belongs to the RapZ-like family.</text>
</comment>